<feature type="chain" id="PRO_1000016953" description="Ribose-5-phosphate isomerase A">
    <location>
        <begin position="1"/>
        <end position="232"/>
    </location>
</feature>
<feature type="active site" description="Proton acceptor" evidence="1">
    <location>
        <position position="105"/>
    </location>
</feature>
<feature type="binding site" evidence="1">
    <location>
        <begin position="28"/>
        <end position="31"/>
    </location>
    <ligand>
        <name>substrate</name>
    </ligand>
</feature>
<feature type="binding site" evidence="1">
    <location>
        <begin position="83"/>
        <end position="86"/>
    </location>
    <ligand>
        <name>substrate</name>
    </ligand>
</feature>
<feature type="binding site" evidence="1">
    <location>
        <begin position="96"/>
        <end position="99"/>
    </location>
    <ligand>
        <name>substrate</name>
    </ligand>
</feature>
<feature type="binding site" evidence="1">
    <location>
        <position position="123"/>
    </location>
    <ligand>
        <name>substrate</name>
    </ligand>
</feature>
<gene>
    <name evidence="1" type="primary">rpiA</name>
    <name type="ordered locus">Nham_1480</name>
</gene>
<reference key="1">
    <citation type="submission" date="2006-03" db="EMBL/GenBank/DDBJ databases">
        <title>Complete sequence of chromosome of Nitrobacter hamburgensis X14.</title>
        <authorList>
            <consortium name="US DOE Joint Genome Institute"/>
            <person name="Copeland A."/>
            <person name="Lucas S."/>
            <person name="Lapidus A."/>
            <person name="Barry K."/>
            <person name="Detter J.C."/>
            <person name="Glavina del Rio T."/>
            <person name="Hammon N."/>
            <person name="Israni S."/>
            <person name="Dalin E."/>
            <person name="Tice H."/>
            <person name="Pitluck S."/>
            <person name="Chain P."/>
            <person name="Malfatti S."/>
            <person name="Shin M."/>
            <person name="Vergez L."/>
            <person name="Schmutz J."/>
            <person name="Larimer F."/>
            <person name="Land M."/>
            <person name="Hauser L."/>
            <person name="Kyrpides N."/>
            <person name="Ivanova N."/>
            <person name="Ward B."/>
            <person name="Arp D."/>
            <person name="Klotz M."/>
            <person name="Stein L."/>
            <person name="O'Mullan G."/>
            <person name="Starkenburg S."/>
            <person name="Sayavedra L."/>
            <person name="Poret-Peterson A.T."/>
            <person name="Gentry M.E."/>
            <person name="Bruce D."/>
            <person name="Richardson P."/>
        </authorList>
    </citation>
    <scope>NUCLEOTIDE SEQUENCE [LARGE SCALE GENOMIC DNA]</scope>
    <source>
        <strain>DSM 10229 / NCIMB 13809 / X14</strain>
    </source>
</reference>
<protein>
    <recommendedName>
        <fullName evidence="1">Ribose-5-phosphate isomerase A</fullName>
        <ecNumber evidence="1">5.3.1.6</ecNumber>
    </recommendedName>
    <alternativeName>
        <fullName evidence="1">Phosphoriboisomerase A</fullName>
        <shortName evidence="1">PRI</shortName>
    </alternativeName>
</protein>
<name>RPIA_NITHX</name>
<organism>
    <name type="scientific">Nitrobacter hamburgensis (strain DSM 10229 / NCIMB 13809 / X14)</name>
    <dbReference type="NCBI Taxonomy" id="323097"/>
    <lineage>
        <taxon>Bacteria</taxon>
        <taxon>Pseudomonadati</taxon>
        <taxon>Pseudomonadota</taxon>
        <taxon>Alphaproteobacteria</taxon>
        <taxon>Hyphomicrobiales</taxon>
        <taxon>Nitrobacteraceae</taxon>
        <taxon>Nitrobacter</taxon>
    </lineage>
</organism>
<proteinExistence type="inferred from homology"/>
<comment type="function">
    <text evidence="1">Catalyzes the reversible conversion of ribose-5-phosphate to ribulose 5-phosphate.</text>
</comment>
<comment type="catalytic activity">
    <reaction evidence="1">
        <text>aldehydo-D-ribose 5-phosphate = D-ribulose 5-phosphate</text>
        <dbReference type="Rhea" id="RHEA:14657"/>
        <dbReference type="ChEBI" id="CHEBI:58121"/>
        <dbReference type="ChEBI" id="CHEBI:58273"/>
        <dbReference type="EC" id="5.3.1.6"/>
    </reaction>
</comment>
<comment type="pathway">
    <text evidence="1">Carbohydrate degradation; pentose phosphate pathway; D-ribose 5-phosphate from D-ribulose 5-phosphate (non-oxidative stage): step 1/1.</text>
</comment>
<comment type="subunit">
    <text evidence="1">Homodimer.</text>
</comment>
<comment type="similarity">
    <text evidence="1">Belongs to the ribose 5-phosphate isomerase family.</text>
</comment>
<keyword id="KW-0413">Isomerase</keyword>
<keyword id="KW-1185">Reference proteome</keyword>
<sequence length="232" mass="24484">MTLDALKRQAAARALEYVEDGMRLGLGTGSTAKHFVELLGERVRDGLKVVGVPTSEATRADAERCGIPLTTLDDLDRLDLTVDGADEIDPDLNLIKGGGGALLREKIVAAASERMIVIADETKWVAGLGRFPLPIEVIPFGLAATRRAIAEAFTKAGASGQMVVRKGPDGLAFVTDGGHWIFDAHLGQIPDASHLAGLLNPIPGVVEHGLFIGLARVAMLAGAQGIRVVERR</sequence>
<evidence type="ECO:0000255" key="1">
    <source>
        <dbReference type="HAMAP-Rule" id="MF_00170"/>
    </source>
</evidence>
<dbReference type="EC" id="5.3.1.6" evidence="1"/>
<dbReference type="EMBL" id="CP000319">
    <property type="protein sequence ID" value="ABE62302.1"/>
    <property type="molecule type" value="Genomic_DNA"/>
</dbReference>
<dbReference type="RefSeq" id="WP_011509992.1">
    <property type="nucleotide sequence ID" value="NC_007964.1"/>
</dbReference>
<dbReference type="SMR" id="Q1QN95"/>
<dbReference type="STRING" id="323097.Nham_1480"/>
<dbReference type="KEGG" id="nha:Nham_1480"/>
<dbReference type="eggNOG" id="COG0120">
    <property type="taxonomic scope" value="Bacteria"/>
</dbReference>
<dbReference type="HOGENOM" id="CLU_056590_1_0_5"/>
<dbReference type="OrthoDB" id="5870696at2"/>
<dbReference type="UniPathway" id="UPA00115">
    <property type="reaction ID" value="UER00412"/>
</dbReference>
<dbReference type="Proteomes" id="UP000001953">
    <property type="component" value="Chromosome"/>
</dbReference>
<dbReference type="GO" id="GO:0004751">
    <property type="term" value="F:ribose-5-phosphate isomerase activity"/>
    <property type="evidence" value="ECO:0007669"/>
    <property type="project" value="UniProtKB-UniRule"/>
</dbReference>
<dbReference type="GO" id="GO:0009052">
    <property type="term" value="P:pentose-phosphate shunt, non-oxidative branch"/>
    <property type="evidence" value="ECO:0007669"/>
    <property type="project" value="UniProtKB-UniRule"/>
</dbReference>
<dbReference type="CDD" id="cd01398">
    <property type="entry name" value="RPI_A"/>
    <property type="match status" value="1"/>
</dbReference>
<dbReference type="FunFam" id="3.40.50.1360:FF:000001">
    <property type="entry name" value="Ribose-5-phosphate isomerase A"/>
    <property type="match status" value="1"/>
</dbReference>
<dbReference type="Gene3D" id="3.30.70.260">
    <property type="match status" value="1"/>
</dbReference>
<dbReference type="Gene3D" id="3.40.50.1360">
    <property type="match status" value="1"/>
</dbReference>
<dbReference type="HAMAP" id="MF_00170">
    <property type="entry name" value="Rib_5P_isom_A"/>
    <property type="match status" value="1"/>
</dbReference>
<dbReference type="InterPro" id="IPR037171">
    <property type="entry name" value="NagB/RpiA_transferase-like"/>
</dbReference>
<dbReference type="InterPro" id="IPR050262">
    <property type="entry name" value="Ribose-5P_isomerase"/>
</dbReference>
<dbReference type="InterPro" id="IPR020672">
    <property type="entry name" value="Ribose5P_isomerase_typA_subgr"/>
</dbReference>
<dbReference type="InterPro" id="IPR004788">
    <property type="entry name" value="Ribose5P_isomerase_type_A"/>
</dbReference>
<dbReference type="NCBIfam" id="NF001924">
    <property type="entry name" value="PRK00702.1"/>
    <property type="match status" value="1"/>
</dbReference>
<dbReference type="NCBIfam" id="TIGR00021">
    <property type="entry name" value="rpiA"/>
    <property type="match status" value="1"/>
</dbReference>
<dbReference type="PANTHER" id="PTHR43748">
    <property type="entry name" value="RIBOSE-5-PHOSPHATE ISOMERASE 3, CHLOROPLASTIC-RELATED"/>
    <property type="match status" value="1"/>
</dbReference>
<dbReference type="PANTHER" id="PTHR43748:SF3">
    <property type="entry name" value="RIBOSE-5-PHOSPHATE ISOMERASE 3, CHLOROPLASTIC-RELATED"/>
    <property type="match status" value="1"/>
</dbReference>
<dbReference type="Pfam" id="PF06026">
    <property type="entry name" value="Rib_5-P_isom_A"/>
    <property type="match status" value="1"/>
</dbReference>
<dbReference type="SUPFAM" id="SSF75445">
    <property type="entry name" value="D-ribose-5-phosphate isomerase (RpiA), lid domain"/>
    <property type="match status" value="1"/>
</dbReference>
<dbReference type="SUPFAM" id="SSF100950">
    <property type="entry name" value="NagB/RpiA/CoA transferase-like"/>
    <property type="match status" value="1"/>
</dbReference>
<accession>Q1QN95</accession>